<comment type="function">
    <text evidence="3">Ran GTPase system comprises ran-1, ran-2 and ran-3 and is essential in nucleocytoplasmic transport. Ran-1 is a GTP-binding protein that mediates the interaction between mitotic chromosomes and kinetochore microtubules. Plays a crucial role in nuclear envelope assembly at the end of each cell division. Required for the import of protein into the nucleus and also for RNA export. RCC1 (ran-3)/Ran (ran-1) complex (together with other proteins) acts as a component of a signal transmission pathway that detects unreplicated DNA.</text>
</comment>
<comment type="subunit">
    <text evidence="1">Found in a nuclear export complex with RanGTP, exportin and pre-miRNA (By similarity).</text>
</comment>
<comment type="interaction">
    <interactant intactId="EBI-324099">
        <id>O17915</id>
    </interactant>
    <interactant intactId="EBI-313076">
        <id>Q86G90</id>
        <label>npp-9</label>
    </interactant>
    <organismsDiffer>false</organismsDiffer>
    <experiments>6</experiments>
</comment>
<comment type="subcellular location">
    <subcellularLocation>
        <location evidence="3">Nucleus</location>
    </subcellularLocation>
    <subcellularLocation>
        <location evidence="3">Chromosome</location>
        <location evidence="3">Centromere</location>
        <location evidence="3">Kinetochore</location>
    </subcellularLocation>
    <subcellularLocation>
        <location evidence="3">Chromosome</location>
    </subcellularLocation>
    <text>At interphase, ran-1 is localized to the nucleus and the nuclear envelope. At prometaphase, ran-1 is still localized to the nuclear envelope. When the nuclear envelope begins to disassemble at M phase (early metaphase), ran-1 is localized throughout the entire cell. At late metaphase, ran-1 localizes to the kinetochore regions, this persists until anaphase. At telophase, ran-1 is localized around the decondensing chromosomes.</text>
</comment>
<comment type="miscellaneous">
    <text evidence="3">Loss of ran-1 results in failure of correct attachment of kinetochore microtubules to mitotic chromosomes and the resultant loss of correct chromosome segregation. The number and the location of centrosomes are normal, and astral microtubules also seem unaffected. Nuclear envelope is not reestablished at the end of each cell division.</text>
</comment>
<comment type="similarity">
    <text evidence="2 4">Belongs to the small GTPase superfamily. Ran family.</text>
</comment>
<reference key="1">
    <citation type="journal article" date="1998" name="Science">
        <title>Genome sequence of the nematode C. elegans: a platform for investigating biology.</title>
        <authorList>
            <consortium name="The C. elegans sequencing consortium"/>
        </authorList>
    </citation>
    <scope>NUCLEOTIDE SEQUENCE [LARGE SCALE GENOMIC DNA]</scope>
    <source>
        <strain>Bristol N2</strain>
    </source>
</reference>
<reference evidence="4" key="2">
    <citation type="journal article" date="2002" name="Curr. Biol.">
        <title>The GTPase Ran regulates chromosome positioning and nuclear envelope assembly in vivo.</title>
        <authorList>
            <person name="Bamba C."/>
            <person name="Bobinnec Y."/>
            <person name="Fukuda M."/>
            <person name="Nishida E."/>
        </authorList>
    </citation>
    <scope>FUNCTION</scope>
    <scope>SUBCELLULAR LOCATION</scope>
    <source>
        <strain evidence="3">Bristol N2</strain>
    </source>
</reference>
<protein>
    <recommendedName>
        <fullName>GTP-binding nuclear protein ran-1</fullName>
    </recommendedName>
    <alternativeName>
        <fullName>Ras-related nuclear protein 1</fullName>
    </alternativeName>
</protein>
<dbReference type="EMBL" id="Z92803">
    <property type="protein sequence ID" value="CAB07240.1"/>
    <property type="molecule type" value="Genomic_DNA"/>
</dbReference>
<dbReference type="PIR" id="T23195">
    <property type="entry name" value="T23195"/>
</dbReference>
<dbReference type="RefSeq" id="NP_499369.1">
    <property type="nucleotide sequence ID" value="NM_066968.8"/>
</dbReference>
<dbReference type="SMR" id="O17915"/>
<dbReference type="BioGRID" id="41690">
    <property type="interactions" value="59"/>
</dbReference>
<dbReference type="DIP" id="DIP-25217N"/>
<dbReference type="FunCoup" id="O17915">
    <property type="interactions" value="2947"/>
</dbReference>
<dbReference type="IntAct" id="O17915">
    <property type="interactions" value="15"/>
</dbReference>
<dbReference type="STRING" id="6239.K01G5.4.1"/>
<dbReference type="iPTMnet" id="O17915"/>
<dbReference type="PaxDb" id="6239-K01G5.4"/>
<dbReference type="PeptideAtlas" id="O17915"/>
<dbReference type="EnsemblMetazoa" id="K01G5.4.1">
    <property type="protein sequence ID" value="K01G5.4.1"/>
    <property type="gene ID" value="WBGene00004302"/>
</dbReference>
<dbReference type="GeneID" id="176503"/>
<dbReference type="KEGG" id="cel:CELE_K01G5.4"/>
<dbReference type="UCSC" id="K01G5.4.1">
    <property type="organism name" value="c. elegans"/>
</dbReference>
<dbReference type="AGR" id="WB:WBGene00004302"/>
<dbReference type="CTD" id="176503"/>
<dbReference type="WormBase" id="K01G5.4">
    <property type="protein sequence ID" value="CE16194"/>
    <property type="gene ID" value="WBGene00004302"/>
    <property type="gene designation" value="ran-1"/>
</dbReference>
<dbReference type="eggNOG" id="KOG0096">
    <property type="taxonomic scope" value="Eukaryota"/>
</dbReference>
<dbReference type="GeneTree" id="ENSGT00940000153786"/>
<dbReference type="HOGENOM" id="CLU_041217_13_0_1"/>
<dbReference type="InParanoid" id="O17915"/>
<dbReference type="OMA" id="FNAWDTA"/>
<dbReference type="OrthoDB" id="48625at2759"/>
<dbReference type="PhylomeDB" id="O17915"/>
<dbReference type="Reactome" id="R-CEL-1655829">
    <property type="pathway name" value="Regulation of cholesterol biosynthesis by SREBP (SREBF)"/>
</dbReference>
<dbReference type="Reactome" id="R-CEL-9615933">
    <property type="pathway name" value="Postmitotic nuclear pore complex (NPC) reformation"/>
</dbReference>
<dbReference type="PRO" id="PR:O17915"/>
<dbReference type="Proteomes" id="UP000001940">
    <property type="component" value="Chromosome III"/>
</dbReference>
<dbReference type="Bgee" id="WBGene00004302">
    <property type="expression patterns" value="Expressed in germ line (C elegans) and 4 other cell types or tissues"/>
</dbReference>
<dbReference type="GO" id="GO:0005737">
    <property type="term" value="C:cytoplasm"/>
    <property type="evidence" value="ECO:0000318"/>
    <property type="project" value="GO_Central"/>
</dbReference>
<dbReference type="GO" id="GO:0000776">
    <property type="term" value="C:kinetochore"/>
    <property type="evidence" value="ECO:0007669"/>
    <property type="project" value="UniProtKB-KW"/>
</dbReference>
<dbReference type="GO" id="GO:0005634">
    <property type="term" value="C:nucleus"/>
    <property type="evidence" value="ECO:0000318"/>
    <property type="project" value="GO_Central"/>
</dbReference>
<dbReference type="GO" id="GO:0005525">
    <property type="term" value="F:GTP binding"/>
    <property type="evidence" value="ECO:0007669"/>
    <property type="project" value="UniProtKB-KW"/>
</dbReference>
<dbReference type="GO" id="GO:0003924">
    <property type="term" value="F:GTPase activity"/>
    <property type="evidence" value="ECO:0000318"/>
    <property type="project" value="GO_Central"/>
</dbReference>
<dbReference type="GO" id="GO:0051301">
    <property type="term" value="P:cell division"/>
    <property type="evidence" value="ECO:0007669"/>
    <property type="project" value="UniProtKB-KW"/>
</dbReference>
<dbReference type="GO" id="GO:0009792">
    <property type="term" value="P:embryo development ending in birth or egg hatching"/>
    <property type="evidence" value="ECO:0000315"/>
    <property type="project" value="WormBase"/>
</dbReference>
<dbReference type="GO" id="GO:0048477">
    <property type="term" value="P:oogenesis"/>
    <property type="evidence" value="ECO:0000315"/>
    <property type="project" value="WormBase"/>
</dbReference>
<dbReference type="GO" id="GO:0006606">
    <property type="term" value="P:protein import into nucleus"/>
    <property type="evidence" value="ECO:0000318"/>
    <property type="project" value="GO_Central"/>
</dbReference>
<dbReference type="GO" id="GO:0000054">
    <property type="term" value="P:ribosomal subunit export from nucleus"/>
    <property type="evidence" value="ECO:0000318"/>
    <property type="project" value="GO_Central"/>
</dbReference>
<dbReference type="CDD" id="cd00877">
    <property type="entry name" value="Ran"/>
    <property type="match status" value="1"/>
</dbReference>
<dbReference type="FunFam" id="3.40.50.300:FF:000131">
    <property type="entry name" value="GTP-binding nuclear protein Ran"/>
    <property type="match status" value="1"/>
</dbReference>
<dbReference type="Gene3D" id="3.40.50.300">
    <property type="entry name" value="P-loop containing nucleotide triphosphate hydrolases"/>
    <property type="match status" value="1"/>
</dbReference>
<dbReference type="InterPro" id="IPR027417">
    <property type="entry name" value="P-loop_NTPase"/>
</dbReference>
<dbReference type="InterPro" id="IPR002041">
    <property type="entry name" value="Ran_GTPase"/>
</dbReference>
<dbReference type="InterPro" id="IPR005225">
    <property type="entry name" value="Small_GTP-bd"/>
</dbReference>
<dbReference type="InterPro" id="IPR001806">
    <property type="entry name" value="Small_GTPase"/>
</dbReference>
<dbReference type="NCBIfam" id="TIGR00231">
    <property type="entry name" value="small_GTP"/>
    <property type="match status" value="1"/>
</dbReference>
<dbReference type="PANTHER" id="PTHR24071:SF0">
    <property type="entry name" value="GTP-BINDING NUCLEAR PROTEIN RAN"/>
    <property type="match status" value="1"/>
</dbReference>
<dbReference type="PANTHER" id="PTHR24071">
    <property type="entry name" value="RAN GTPASE"/>
    <property type="match status" value="1"/>
</dbReference>
<dbReference type="Pfam" id="PF00071">
    <property type="entry name" value="Ras"/>
    <property type="match status" value="1"/>
</dbReference>
<dbReference type="PRINTS" id="PR00627">
    <property type="entry name" value="GTPRANTC4"/>
</dbReference>
<dbReference type="SMART" id="SM00175">
    <property type="entry name" value="RAB"/>
    <property type="match status" value="1"/>
</dbReference>
<dbReference type="SMART" id="SM00176">
    <property type="entry name" value="RAN"/>
    <property type="match status" value="1"/>
</dbReference>
<dbReference type="SMART" id="SM00173">
    <property type="entry name" value="RAS"/>
    <property type="match status" value="1"/>
</dbReference>
<dbReference type="SMART" id="SM00174">
    <property type="entry name" value="RHO"/>
    <property type="match status" value="1"/>
</dbReference>
<dbReference type="SUPFAM" id="SSF52540">
    <property type="entry name" value="P-loop containing nucleoside triphosphate hydrolases"/>
    <property type="match status" value="1"/>
</dbReference>
<dbReference type="PROSITE" id="PS51418">
    <property type="entry name" value="RAN"/>
    <property type="match status" value="1"/>
</dbReference>
<sequence length="215" mass="24254">MSGGDGIPTFKLVLVGDGGTGKTTFVKRHLTGEFEKKYVATLGVEVHPLVFHTNRGQIRFNVWDTAGQEKFGGLRDGYYIQGQCAIIMFDVTARVTYKNVPNWHRDLARVCENIPIVLCGNKVDVKDRKVKAKTITFHRKKNLQYYDISAKSNYNFEKPFLWLARKLLGDPNLEFVAMPALAPPEVQMDPAMIAEYEKDLDNAAKADLPDDDDDL</sequence>
<accession>O17915</accession>
<name>RAN_CAEEL</name>
<organism evidence="5">
    <name type="scientific">Caenorhabditis elegans</name>
    <dbReference type="NCBI Taxonomy" id="6239"/>
    <lineage>
        <taxon>Eukaryota</taxon>
        <taxon>Metazoa</taxon>
        <taxon>Ecdysozoa</taxon>
        <taxon>Nematoda</taxon>
        <taxon>Chromadorea</taxon>
        <taxon>Rhabditida</taxon>
        <taxon>Rhabditina</taxon>
        <taxon>Rhabditomorpha</taxon>
        <taxon>Rhabditoidea</taxon>
        <taxon>Rhabditidae</taxon>
        <taxon>Peloderinae</taxon>
        <taxon>Caenorhabditis</taxon>
    </lineage>
</organism>
<feature type="chain" id="PRO_0000208708" description="GTP-binding nuclear protein ran-1">
    <location>
        <begin position="1"/>
        <end position="215"/>
    </location>
</feature>
<feature type="domain" description="Small GTPase Ran-type" evidence="2">
    <location>
        <begin position="6"/>
        <end position="170"/>
    </location>
</feature>
<feature type="region of interest" description="Switch-I" evidence="2">
    <location>
        <begin position="36"/>
        <end position="44"/>
    </location>
</feature>
<feature type="region of interest" description="Switch-II" evidence="2">
    <location>
        <begin position="67"/>
        <end position="83"/>
    </location>
</feature>
<feature type="binding site" evidence="1">
    <location>
        <begin position="17"/>
        <end position="24"/>
    </location>
    <ligand>
        <name>GTP</name>
        <dbReference type="ChEBI" id="CHEBI:37565"/>
    </ligand>
</feature>
<feature type="binding site" evidence="1">
    <location>
        <position position="67"/>
    </location>
    <ligand>
        <name>GTP</name>
        <dbReference type="ChEBI" id="CHEBI:37565"/>
    </ligand>
</feature>
<feature type="binding site" evidence="1">
    <location>
        <begin position="121"/>
        <end position="124"/>
    </location>
    <ligand>
        <name>GTP</name>
        <dbReference type="ChEBI" id="CHEBI:37565"/>
    </ligand>
</feature>
<feature type="binding site" evidence="1">
    <location>
        <begin position="149"/>
        <end position="151"/>
    </location>
    <ligand>
        <name>GTP</name>
        <dbReference type="ChEBI" id="CHEBI:37565"/>
    </ligand>
</feature>
<proteinExistence type="evidence at protein level"/>
<gene>
    <name type="primary">ran-1</name>
    <name type="ORF">K01G5.4</name>
</gene>
<evidence type="ECO:0000250" key="1">
    <source>
        <dbReference type="UniProtKB" id="P62825"/>
    </source>
</evidence>
<evidence type="ECO:0000255" key="2">
    <source>
        <dbReference type="PROSITE-ProRule" id="PRU00752"/>
    </source>
</evidence>
<evidence type="ECO:0000269" key="3">
    <source>
    </source>
</evidence>
<evidence type="ECO:0000305" key="4"/>
<evidence type="ECO:0000312" key="5">
    <source>
        <dbReference type="EMBL" id="CAB07240.1"/>
    </source>
</evidence>
<keyword id="KW-0131">Cell cycle</keyword>
<keyword id="KW-0132">Cell division</keyword>
<keyword id="KW-0137">Centromere</keyword>
<keyword id="KW-0158">Chromosome</keyword>
<keyword id="KW-0342">GTP-binding</keyword>
<keyword id="KW-0995">Kinetochore</keyword>
<keyword id="KW-0498">Mitosis</keyword>
<keyword id="KW-0547">Nucleotide-binding</keyword>
<keyword id="KW-0539">Nucleus</keyword>
<keyword id="KW-0653">Protein transport</keyword>
<keyword id="KW-1185">Reference proteome</keyword>
<keyword id="KW-0813">Transport</keyword>